<evidence type="ECO:0000250" key="1"/>
<evidence type="ECO:0000255" key="2"/>
<evidence type="ECO:0000256" key="3">
    <source>
        <dbReference type="SAM" id="MobiDB-lite"/>
    </source>
</evidence>
<evidence type="ECO:0000305" key="4"/>
<name>SPT16_ORYSJ</name>
<dbReference type="EMBL" id="AL663005">
    <property type="protein sequence ID" value="CAD40293.2"/>
    <property type="molecule type" value="Genomic_DNA"/>
</dbReference>
<dbReference type="EMBL" id="AP008210">
    <property type="protein sequence ID" value="BAF14377.1"/>
    <property type="molecule type" value="Genomic_DNA"/>
</dbReference>
<dbReference type="EMBL" id="AP014960">
    <property type="protein sequence ID" value="BAS88578.1"/>
    <property type="molecule type" value="Genomic_DNA"/>
</dbReference>
<dbReference type="EMBL" id="AK121570">
    <property type="protein sequence ID" value="BAH00556.1"/>
    <property type="molecule type" value="mRNA"/>
</dbReference>
<dbReference type="RefSeq" id="XP_015635636.1">
    <property type="nucleotide sequence ID" value="XM_015780150.1"/>
</dbReference>
<dbReference type="SMR" id="Q7X923"/>
<dbReference type="FunCoup" id="Q7X923">
    <property type="interactions" value="3387"/>
</dbReference>
<dbReference type="STRING" id="39947.Q7X923"/>
<dbReference type="PaxDb" id="39947-Q7X923"/>
<dbReference type="EnsemblPlants" id="Os04t0321600-01">
    <property type="protein sequence ID" value="Os04t0321600-01"/>
    <property type="gene ID" value="Os04g0321600"/>
</dbReference>
<dbReference type="Gramene" id="Os04t0321600-01">
    <property type="protein sequence ID" value="Os04t0321600-01"/>
    <property type="gene ID" value="Os04g0321600"/>
</dbReference>
<dbReference type="KEGG" id="dosa:Os04g0321600"/>
<dbReference type="eggNOG" id="KOG1189">
    <property type="taxonomic scope" value="Eukaryota"/>
</dbReference>
<dbReference type="HOGENOM" id="CLU_004627_1_0_1"/>
<dbReference type="InParanoid" id="Q7X923"/>
<dbReference type="OMA" id="MECESKK"/>
<dbReference type="OrthoDB" id="10251642at2759"/>
<dbReference type="Proteomes" id="UP000000763">
    <property type="component" value="Chromosome 4"/>
</dbReference>
<dbReference type="Proteomes" id="UP000059680">
    <property type="component" value="Chromosome 4"/>
</dbReference>
<dbReference type="GO" id="GO:0035101">
    <property type="term" value="C:FACT complex"/>
    <property type="evidence" value="ECO:0000318"/>
    <property type="project" value="GO_Central"/>
</dbReference>
<dbReference type="GO" id="GO:0031491">
    <property type="term" value="F:nucleosome binding"/>
    <property type="evidence" value="ECO:0000318"/>
    <property type="project" value="GO_Central"/>
</dbReference>
<dbReference type="GO" id="GO:0006281">
    <property type="term" value="P:DNA repair"/>
    <property type="evidence" value="ECO:0007669"/>
    <property type="project" value="UniProtKB-KW"/>
</dbReference>
<dbReference type="GO" id="GO:0006260">
    <property type="term" value="P:DNA replication"/>
    <property type="evidence" value="ECO:0007669"/>
    <property type="project" value="UniProtKB-KW"/>
</dbReference>
<dbReference type="GO" id="GO:0006368">
    <property type="term" value="P:transcription elongation by RNA polymerase II"/>
    <property type="evidence" value="ECO:0000318"/>
    <property type="project" value="GO_Central"/>
</dbReference>
<dbReference type="CDD" id="cd01091">
    <property type="entry name" value="CDC68-like"/>
    <property type="match status" value="1"/>
</dbReference>
<dbReference type="FunFam" id="2.30.29.150:FF:000004">
    <property type="entry name" value="FACT complex subunit SPT16"/>
    <property type="match status" value="1"/>
</dbReference>
<dbReference type="FunFam" id="2.30.29.210:FF:000002">
    <property type="entry name" value="FACT complex subunit SPT16"/>
    <property type="match status" value="1"/>
</dbReference>
<dbReference type="FunFam" id="2.30.29.30:FF:000017">
    <property type="entry name" value="FACT complex subunit SPT16"/>
    <property type="match status" value="1"/>
</dbReference>
<dbReference type="FunFam" id="3.40.350.10:FF:000006">
    <property type="entry name" value="FACT complex subunit SPT16"/>
    <property type="match status" value="1"/>
</dbReference>
<dbReference type="FunFam" id="3.90.230.10:FF:000005">
    <property type="entry name" value="FACT complex subunit spt16"/>
    <property type="match status" value="1"/>
</dbReference>
<dbReference type="Gene3D" id="2.30.29.150">
    <property type="match status" value="1"/>
</dbReference>
<dbReference type="Gene3D" id="3.90.230.10">
    <property type="entry name" value="Creatinase/methionine aminopeptidase superfamily"/>
    <property type="match status" value="1"/>
</dbReference>
<dbReference type="Gene3D" id="3.40.350.10">
    <property type="entry name" value="Creatinase/prolidase N-terminal domain"/>
    <property type="match status" value="1"/>
</dbReference>
<dbReference type="Gene3D" id="2.30.29.210">
    <property type="entry name" value="FACT complex subunit Spt16p/Cdc68p"/>
    <property type="match status" value="1"/>
</dbReference>
<dbReference type="Gene3D" id="2.30.29.30">
    <property type="entry name" value="Pleckstrin-homology domain (PH domain)/Phosphotyrosine-binding domain (PTB)"/>
    <property type="match status" value="1"/>
</dbReference>
<dbReference type="InterPro" id="IPR029149">
    <property type="entry name" value="Creatin/AminoP/Spt16_N"/>
</dbReference>
<dbReference type="InterPro" id="IPR036005">
    <property type="entry name" value="Creatinase/aminopeptidase-like"/>
</dbReference>
<dbReference type="InterPro" id="IPR029148">
    <property type="entry name" value="FACT-SPT16_Nlobe"/>
</dbReference>
<dbReference type="InterPro" id="IPR056595">
    <property type="entry name" value="Fact-SPT16_PH"/>
</dbReference>
<dbReference type="InterPro" id="IPR048969">
    <property type="entry name" value="FACT_SPT16_C"/>
</dbReference>
<dbReference type="InterPro" id="IPR013953">
    <property type="entry name" value="FACT_SPT16_M"/>
</dbReference>
<dbReference type="InterPro" id="IPR000994">
    <property type="entry name" value="Pept_M24"/>
</dbReference>
<dbReference type="InterPro" id="IPR011993">
    <property type="entry name" value="PH-like_dom_sf"/>
</dbReference>
<dbReference type="InterPro" id="IPR013719">
    <property type="entry name" value="RTT106/SPT16-like_middle_dom"/>
</dbReference>
<dbReference type="InterPro" id="IPR040258">
    <property type="entry name" value="Spt16"/>
</dbReference>
<dbReference type="InterPro" id="IPR033825">
    <property type="entry name" value="Spt16_M24"/>
</dbReference>
<dbReference type="PANTHER" id="PTHR13980">
    <property type="entry name" value="CDC68 RELATED"/>
    <property type="match status" value="1"/>
</dbReference>
<dbReference type="PANTHER" id="PTHR13980:SF15">
    <property type="entry name" value="FACT COMPLEX SUBUNIT SPT16"/>
    <property type="match status" value="1"/>
</dbReference>
<dbReference type="Pfam" id="PF14826">
    <property type="entry name" value="FACT-Spt16_Nlob"/>
    <property type="match status" value="1"/>
</dbReference>
<dbReference type="Pfam" id="PF00557">
    <property type="entry name" value="Peptidase_M24"/>
    <property type="match status" value="1"/>
</dbReference>
<dbReference type="Pfam" id="PF24824">
    <property type="entry name" value="PH_SPT16"/>
    <property type="match status" value="1"/>
</dbReference>
<dbReference type="Pfam" id="PF08512">
    <property type="entry name" value="Rttp106-like_middle"/>
    <property type="match status" value="1"/>
</dbReference>
<dbReference type="Pfam" id="PF08644">
    <property type="entry name" value="SPT16"/>
    <property type="match status" value="1"/>
</dbReference>
<dbReference type="Pfam" id="PF21091">
    <property type="entry name" value="SPT16_C"/>
    <property type="match status" value="1"/>
</dbReference>
<dbReference type="SMART" id="SM01285">
    <property type="entry name" value="FACT-Spt16_Nlob"/>
    <property type="match status" value="1"/>
</dbReference>
<dbReference type="SMART" id="SM01287">
    <property type="entry name" value="Rtt106"/>
    <property type="match status" value="1"/>
</dbReference>
<dbReference type="SMART" id="SM01286">
    <property type="entry name" value="SPT16"/>
    <property type="match status" value="1"/>
</dbReference>
<dbReference type="SUPFAM" id="SSF55920">
    <property type="entry name" value="Creatinase/aminopeptidase"/>
    <property type="match status" value="1"/>
</dbReference>
<gene>
    <name type="primary">SPT16</name>
    <name type="ordered locus">Os04g0321600</name>
    <name type="ordered locus">LOC_Os04g25550</name>
    <name type="ORF">OSJNBb0062H02.2</name>
</gene>
<keyword id="KW-0158">Chromosome</keyword>
<keyword id="KW-0175">Coiled coil</keyword>
<keyword id="KW-0227">DNA damage</keyword>
<keyword id="KW-0234">DNA repair</keyword>
<keyword id="KW-0235">DNA replication</keyword>
<keyword id="KW-0539">Nucleus</keyword>
<keyword id="KW-1185">Reference proteome</keyword>
<keyword id="KW-0804">Transcription</keyword>
<keyword id="KW-0805">Transcription regulation</keyword>
<protein>
    <recommendedName>
        <fullName>FACT complex subunit SPT16</fullName>
    </recommendedName>
    <alternativeName>
        <fullName>Facilitates chromatin transcription complex subunit SPT16</fullName>
    </alternativeName>
</protein>
<proteinExistence type="evidence at transcript level"/>
<comment type="function">
    <text evidence="1">Component of the FACT complex, a general chromatin factor that acts to reorganize nucleosomes. The FACT complex is involved in multiple processes that require DNA as a template such as mRNA elongation, DNA replication and DNA repair. During transcription elongation the FACT complex acts as a histone chaperone that both destabilizes and restores nucleosomal structure. It facilitates the passage of RNA polymerase II and transcription by promoting the dissociation of one histone H2A-H2B dimer from the nucleosome, then subsequently promotes the reestablishment of the nucleosome following the passage of RNA polymerase II. SSRP1 binds specifically to double-stranded DNA (By similarity).</text>
</comment>
<comment type="subunit">
    <text evidence="1">Component of the FACT complex, a stable heterodimer of SPT16 and SSRP.</text>
</comment>
<comment type="subcellular location">
    <subcellularLocation>
        <location evidence="1">Nucleus</location>
    </subcellularLocation>
    <subcellularLocation>
        <location evidence="1">Chromosome</location>
    </subcellularLocation>
</comment>
<comment type="similarity">
    <text evidence="4">Belongs to the peptidase M24 family. SPT16 subfamily.</text>
</comment>
<comment type="caution">
    <text evidence="4">Although related to the peptidase M24 family, this protein lacks conserved active site residues suggesting that it may lack peptidase activity.</text>
</comment>
<organism>
    <name type="scientific">Oryza sativa subsp. japonica</name>
    <name type="common">Rice</name>
    <dbReference type="NCBI Taxonomy" id="39947"/>
    <lineage>
        <taxon>Eukaryota</taxon>
        <taxon>Viridiplantae</taxon>
        <taxon>Streptophyta</taxon>
        <taxon>Embryophyta</taxon>
        <taxon>Tracheophyta</taxon>
        <taxon>Spermatophyta</taxon>
        <taxon>Magnoliopsida</taxon>
        <taxon>Liliopsida</taxon>
        <taxon>Poales</taxon>
        <taxon>Poaceae</taxon>
        <taxon>BOP clade</taxon>
        <taxon>Oryzoideae</taxon>
        <taxon>Oryzeae</taxon>
        <taxon>Oryzinae</taxon>
        <taxon>Oryza</taxon>
        <taxon>Oryza sativa</taxon>
    </lineage>
</organism>
<reference key="1">
    <citation type="journal article" date="2002" name="Nature">
        <title>Sequence and analysis of rice chromosome 4.</title>
        <authorList>
            <person name="Feng Q."/>
            <person name="Zhang Y."/>
            <person name="Hao P."/>
            <person name="Wang S."/>
            <person name="Fu G."/>
            <person name="Huang Y."/>
            <person name="Li Y."/>
            <person name="Zhu J."/>
            <person name="Liu Y."/>
            <person name="Hu X."/>
            <person name="Jia P."/>
            <person name="Zhang Y."/>
            <person name="Zhao Q."/>
            <person name="Ying K."/>
            <person name="Yu S."/>
            <person name="Tang Y."/>
            <person name="Weng Q."/>
            <person name="Zhang L."/>
            <person name="Lu Y."/>
            <person name="Mu J."/>
            <person name="Lu Y."/>
            <person name="Zhang L.S."/>
            <person name="Yu Z."/>
            <person name="Fan D."/>
            <person name="Liu X."/>
            <person name="Lu T."/>
            <person name="Li C."/>
            <person name="Wu Y."/>
            <person name="Sun T."/>
            <person name="Lei H."/>
            <person name="Li T."/>
            <person name="Hu H."/>
            <person name="Guan J."/>
            <person name="Wu M."/>
            <person name="Zhang R."/>
            <person name="Zhou B."/>
            <person name="Chen Z."/>
            <person name="Chen L."/>
            <person name="Jin Z."/>
            <person name="Wang R."/>
            <person name="Yin H."/>
            <person name="Cai Z."/>
            <person name="Ren S."/>
            <person name="Lv G."/>
            <person name="Gu W."/>
            <person name="Zhu G."/>
            <person name="Tu Y."/>
            <person name="Jia J."/>
            <person name="Zhang Y."/>
            <person name="Chen J."/>
            <person name="Kang H."/>
            <person name="Chen X."/>
            <person name="Shao C."/>
            <person name="Sun Y."/>
            <person name="Hu Q."/>
            <person name="Zhang X."/>
            <person name="Zhang W."/>
            <person name="Wang L."/>
            <person name="Ding C."/>
            <person name="Sheng H."/>
            <person name="Gu J."/>
            <person name="Chen S."/>
            <person name="Ni L."/>
            <person name="Zhu F."/>
            <person name="Chen W."/>
            <person name="Lan L."/>
            <person name="Lai Y."/>
            <person name="Cheng Z."/>
            <person name="Gu M."/>
            <person name="Jiang J."/>
            <person name="Li J."/>
            <person name="Hong G."/>
            <person name="Xue Y."/>
            <person name="Han B."/>
        </authorList>
    </citation>
    <scope>NUCLEOTIDE SEQUENCE [LARGE SCALE GENOMIC DNA]</scope>
    <source>
        <strain>cv. Nipponbare</strain>
    </source>
</reference>
<reference key="2">
    <citation type="journal article" date="2005" name="Nature">
        <title>The map-based sequence of the rice genome.</title>
        <authorList>
            <consortium name="International rice genome sequencing project (IRGSP)"/>
        </authorList>
    </citation>
    <scope>NUCLEOTIDE SEQUENCE [LARGE SCALE GENOMIC DNA]</scope>
    <source>
        <strain>cv. Nipponbare</strain>
    </source>
</reference>
<reference key="3">
    <citation type="journal article" date="2008" name="Nucleic Acids Res.">
        <title>The rice annotation project database (RAP-DB): 2008 update.</title>
        <authorList>
            <consortium name="The rice annotation project (RAP)"/>
        </authorList>
    </citation>
    <scope>GENOME REANNOTATION</scope>
    <source>
        <strain>cv. Nipponbare</strain>
    </source>
</reference>
<reference key="4">
    <citation type="journal article" date="2013" name="Rice">
        <title>Improvement of the Oryza sativa Nipponbare reference genome using next generation sequence and optical map data.</title>
        <authorList>
            <person name="Kawahara Y."/>
            <person name="de la Bastide M."/>
            <person name="Hamilton J.P."/>
            <person name="Kanamori H."/>
            <person name="McCombie W.R."/>
            <person name="Ouyang S."/>
            <person name="Schwartz D.C."/>
            <person name="Tanaka T."/>
            <person name="Wu J."/>
            <person name="Zhou S."/>
            <person name="Childs K.L."/>
            <person name="Davidson R.M."/>
            <person name="Lin H."/>
            <person name="Quesada-Ocampo L."/>
            <person name="Vaillancourt B."/>
            <person name="Sakai H."/>
            <person name="Lee S.S."/>
            <person name="Kim J."/>
            <person name="Numa H."/>
            <person name="Itoh T."/>
            <person name="Buell C.R."/>
            <person name="Matsumoto T."/>
        </authorList>
    </citation>
    <scope>GENOME REANNOTATION</scope>
    <source>
        <strain>cv. Nipponbare</strain>
    </source>
</reference>
<reference key="5">
    <citation type="journal article" date="2003" name="Science">
        <title>Collection, mapping, and annotation of over 28,000 cDNA clones from japonica rice.</title>
        <authorList>
            <consortium name="The rice full-length cDNA consortium"/>
        </authorList>
    </citation>
    <scope>NUCLEOTIDE SEQUENCE [LARGE SCALE MRNA]</scope>
    <source>
        <strain>cv. Nipponbare</strain>
    </source>
</reference>
<feature type="chain" id="PRO_0000245177" description="FACT complex subunit SPT16">
    <location>
        <begin position="1"/>
        <end position="1056"/>
    </location>
</feature>
<feature type="region of interest" description="Disordered" evidence="3">
    <location>
        <begin position="467"/>
        <end position="524"/>
    </location>
</feature>
<feature type="region of interest" description="Disordered" evidence="3">
    <location>
        <begin position="942"/>
        <end position="1056"/>
    </location>
</feature>
<feature type="coiled-coil region" evidence="2">
    <location>
        <begin position="316"/>
        <end position="336"/>
    </location>
</feature>
<feature type="coiled-coil region" evidence="2">
    <location>
        <begin position="768"/>
        <end position="789"/>
    </location>
</feature>
<feature type="compositionally biased region" description="Basic and acidic residues" evidence="3">
    <location>
        <begin position="477"/>
        <end position="504"/>
    </location>
</feature>
<feature type="compositionally biased region" description="Acidic residues" evidence="3">
    <location>
        <begin position="943"/>
        <end position="995"/>
    </location>
</feature>
<feature type="compositionally biased region" description="Basic and acidic residues" evidence="3">
    <location>
        <begin position="996"/>
        <end position="1016"/>
    </location>
</feature>
<accession>Q7X923</accession>
<accession>Q0JE60</accession>
<sequence length="1056" mass="118588">MADNGNAKPGGGGSGAYTINLDNFSKRLKVFYDHWKEHNSDLWGSSNAIAIATPPPSEDLRYLKSSALDVWLLGYEFPETIIVFMHKQIHFLCSQKKANLIGTLKKAANDAVGADIVLHVKAKNDSGVGLMEDIVRAVCAQSKSDDPIVGHIAKEAPEGKLLEAWADKLSSSSVQLTDITNGFSELFAMKDTSEITCVKKASYLTSSVMKNFVVPKLEKVIDEERKVTHSSLMDETEKAILDPLKVKVKLKAENVDICYPPVFQSGGKFDLKPGASSNDDYLYYDSASVIICAIGARYGNYCSNMARTFLIDATPTQIKAYETLMKAHEAALEALKPGNRMSAVYQAAVDVIEKNAPELLRNLTKSAGTGIGLEFRESGLNLNPKNDRIIKAGMVFNVSLGLHNLQAEKKSEKTKQYSLLLADTCLVPLENLTASCSKLVKDVAYSFNDEDEVLPVKKVEVNAKEALPPTKATLRSDNQEMSKEELRRQHQAELARQKNEETARRLAGVGSGSGDGRGPSRSSNELVAYKNVNDVPYARELVIQVDQKNEAVLLPIYGSMVPFHVSTVKSVTSHQDNRTCTIRIFFNVPGMPFSNDSNLKSQGAIYLKEITFRSKDPRHSSEVVQQIKTLRRQVASRESERAERATLVTQEKLQLTSNRNKPVRLSDVWIRPAFGGRGRKLTGTLESHVNGFRYSTSRADERVDIMYGNVKHAFFQPAEKEMITLLHFHLHNHIMVGNKKTKDVQFYVEVMDVVQTLGGNRRSALDPDEIEEEQRERDRKNRINMDFQNFVNKVNDHWSQPQFKGLDLEFDVPLRELGFHGVPYKASAFIIPTSTCLVELIETPFLVVTLSEIEIVNLERVGFGTKNFDMAIVFKDFKKDVLRIDSIPSTSLDAIKEWLDTTDLKYYESRLNLNWRPILKTIIDDPQKFIDDGGWEFLNMEASDSETEETEESDQGYEPSDAEPESESEDEDSDSESLVESDEDDEDDSEEDSEEEKGKTWEELEREASNADRENGAESDSEEERRRRKVKTFSKSRPPPERSSFKGGPSKKPKFR</sequence>